<protein>
    <recommendedName>
        <fullName evidence="1">DNA-directed RNA polymerase subunit Rpo10</fullName>
        <ecNumber evidence="1">2.7.7.6</ecNumber>
    </recommendedName>
    <alternativeName>
        <fullName evidence="1">DNA-directed RNA polymerase subunit N</fullName>
    </alternativeName>
</protein>
<proteinExistence type="inferred from homology"/>
<keyword id="KW-0963">Cytoplasm</keyword>
<keyword id="KW-0240">DNA-directed RNA polymerase</keyword>
<keyword id="KW-0479">Metal-binding</keyword>
<keyword id="KW-0548">Nucleotidyltransferase</keyword>
<keyword id="KW-1185">Reference proteome</keyword>
<keyword id="KW-0804">Transcription</keyword>
<keyword id="KW-0808">Transferase</keyword>
<keyword id="KW-0862">Zinc</keyword>
<accession>Q2FTN7</accession>
<organism>
    <name type="scientific">Methanospirillum hungatei JF-1 (strain ATCC 27890 / DSM 864 / NBRC 100397 / JF-1)</name>
    <dbReference type="NCBI Taxonomy" id="323259"/>
    <lineage>
        <taxon>Archaea</taxon>
        <taxon>Methanobacteriati</taxon>
        <taxon>Methanobacteriota</taxon>
        <taxon>Stenosarchaea group</taxon>
        <taxon>Methanomicrobia</taxon>
        <taxon>Methanomicrobiales</taxon>
        <taxon>Methanospirillaceae</taxon>
        <taxon>Methanospirillum</taxon>
    </lineage>
</organism>
<reference key="1">
    <citation type="journal article" date="2016" name="Stand. Genomic Sci.">
        <title>Complete genome sequence of Methanospirillum hungatei type strain JF1.</title>
        <authorList>
            <person name="Gunsalus R.P."/>
            <person name="Cook L.E."/>
            <person name="Crable B."/>
            <person name="Rohlin L."/>
            <person name="McDonald E."/>
            <person name="Mouttaki H."/>
            <person name="Sieber J.R."/>
            <person name="Poweleit N."/>
            <person name="Zhou H."/>
            <person name="Lapidus A.L."/>
            <person name="Daligault H.E."/>
            <person name="Land M."/>
            <person name="Gilna P."/>
            <person name="Ivanova N."/>
            <person name="Kyrpides N."/>
            <person name="Culley D.E."/>
            <person name="McInerney M.J."/>
        </authorList>
    </citation>
    <scope>NUCLEOTIDE SEQUENCE [LARGE SCALE GENOMIC DNA]</scope>
    <source>
        <strain>ATCC 27890 / DSM 864 / NBRC 100397 / JF-1</strain>
    </source>
</reference>
<sequence length="62" mass="7441">MIPVRCFTCGKVISTAYEEFKRRRDASEDPKRILDDLGMDRYCCRRMLLTHKEIIDELNPYQ</sequence>
<evidence type="ECO:0000255" key="1">
    <source>
        <dbReference type="HAMAP-Rule" id="MF_00250"/>
    </source>
</evidence>
<name>RPO10_METHJ</name>
<dbReference type="EC" id="2.7.7.6" evidence="1"/>
<dbReference type="EMBL" id="CP000254">
    <property type="protein sequence ID" value="ABD42587.1"/>
    <property type="molecule type" value="Genomic_DNA"/>
</dbReference>
<dbReference type="RefSeq" id="WP_011449840.1">
    <property type="nucleotide sequence ID" value="NC_007796.1"/>
</dbReference>
<dbReference type="SMR" id="Q2FTN7"/>
<dbReference type="FunCoup" id="Q2FTN7">
    <property type="interactions" value="63"/>
</dbReference>
<dbReference type="STRING" id="323259.Mhun_2895"/>
<dbReference type="EnsemblBacteria" id="ABD42587">
    <property type="protein sequence ID" value="ABD42587"/>
    <property type="gene ID" value="Mhun_2895"/>
</dbReference>
<dbReference type="GeneID" id="32154847"/>
<dbReference type="KEGG" id="mhu:Mhun_2895"/>
<dbReference type="eggNOG" id="arCOG04244">
    <property type="taxonomic scope" value="Archaea"/>
</dbReference>
<dbReference type="HOGENOM" id="CLU_143122_1_1_2"/>
<dbReference type="InParanoid" id="Q2FTN7"/>
<dbReference type="OrthoDB" id="371754at2157"/>
<dbReference type="Proteomes" id="UP000001941">
    <property type="component" value="Chromosome"/>
</dbReference>
<dbReference type="GO" id="GO:0005737">
    <property type="term" value="C:cytoplasm"/>
    <property type="evidence" value="ECO:0007669"/>
    <property type="project" value="UniProtKB-SubCell"/>
</dbReference>
<dbReference type="GO" id="GO:0000428">
    <property type="term" value="C:DNA-directed RNA polymerase complex"/>
    <property type="evidence" value="ECO:0007669"/>
    <property type="project" value="UniProtKB-KW"/>
</dbReference>
<dbReference type="GO" id="GO:0003677">
    <property type="term" value="F:DNA binding"/>
    <property type="evidence" value="ECO:0007669"/>
    <property type="project" value="InterPro"/>
</dbReference>
<dbReference type="GO" id="GO:0003899">
    <property type="term" value="F:DNA-directed RNA polymerase activity"/>
    <property type="evidence" value="ECO:0007669"/>
    <property type="project" value="UniProtKB-UniRule"/>
</dbReference>
<dbReference type="GO" id="GO:0008270">
    <property type="term" value="F:zinc ion binding"/>
    <property type="evidence" value="ECO:0007669"/>
    <property type="project" value="UniProtKB-UniRule"/>
</dbReference>
<dbReference type="GO" id="GO:0006351">
    <property type="term" value="P:DNA-templated transcription"/>
    <property type="evidence" value="ECO:0007669"/>
    <property type="project" value="UniProtKB-UniRule"/>
</dbReference>
<dbReference type="Gene3D" id="1.10.10.60">
    <property type="entry name" value="Homeodomain-like"/>
    <property type="match status" value="1"/>
</dbReference>
<dbReference type="HAMAP" id="MF_00250">
    <property type="entry name" value="RNApol_arch_Rpo10"/>
    <property type="match status" value="1"/>
</dbReference>
<dbReference type="InterPro" id="IPR023580">
    <property type="entry name" value="RNA_pol_su_RPB10"/>
</dbReference>
<dbReference type="InterPro" id="IPR020789">
    <property type="entry name" value="RNA_pol_suN_Zn-BS"/>
</dbReference>
<dbReference type="InterPro" id="IPR000268">
    <property type="entry name" value="RPABC5/Rpb10"/>
</dbReference>
<dbReference type="NCBIfam" id="NF003089">
    <property type="entry name" value="PRK04016.1"/>
    <property type="match status" value="1"/>
</dbReference>
<dbReference type="PANTHER" id="PTHR23431:SF3">
    <property type="entry name" value="DNA-DIRECTED RNA POLYMERASES I, II, AND III SUBUNIT RPABC5"/>
    <property type="match status" value="1"/>
</dbReference>
<dbReference type="PANTHER" id="PTHR23431">
    <property type="entry name" value="DNA-DIRECTED RNA POLYMERASES I, II, AND III SUBUNIT RPABC5 FAMILY MEMBER"/>
    <property type="match status" value="1"/>
</dbReference>
<dbReference type="Pfam" id="PF01194">
    <property type="entry name" value="RNA_pol_N"/>
    <property type="match status" value="1"/>
</dbReference>
<dbReference type="PIRSF" id="PIRSF005653">
    <property type="entry name" value="RNA_pol_N/8_sub"/>
    <property type="match status" value="1"/>
</dbReference>
<dbReference type="SUPFAM" id="SSF46924">
    <property type="entry name" value="RNA polymerase subunit RPB10"/>
    <property type="match status" value="1"/>
</dbReference>
<dbReference type="PROSITE" id="PS01112">
    <property type="entry name" value="RNA_POL_N_8KD"/>
    <property type="match status" value="1"/>
</dbReference>
<gene>
    <name evidence="1" type="primary">rpo10</name>
    <name evidence="1" type="synonym">rpoN</name>
    <name type="ordered locus">Mhun_2895</name>
</gene>
<comment type="function">
    <text evidence="1">DNA-dependent RNA polymerase (RNAP) catalyzes the transcription of DNA into RNA using the four ribonucleoside triphosphates as substrates.</text>
</comment>
<comment type="catalytic activity">
    <reaction evidence="1">
        <text>RNA(n) + a ribonucleoside 5'-triphosphate = RNA(n+1) + diphosphate</text>
        <dbReference type="Rhea" id="RHEA:21248"/>
        <dbReference type="Rhea" id="RHEA-COMP:14527"/>
        <dbReference type="Rhea" id="RHEA-COMP:17342"/>
        <dbReference type="ChEBI" id="CHEBI:33019"/>
        <dbReference type="ChEBI" id="CHEBI:61557"/>
        <dbReference type="ChEBI" id="CHEBI:140395"/>
        <dbReference type="EC" id="2.7.7.6"/>
    </reaction>
</comment>
<comment type="cofactor">
    <cofactor evidence="1">
        <name>Zn(2+)</name>
        <dbReference type="ChEBI" id="CHEBI:29105"/>
    </cofactor>
    <text evidence="1">Binds 1 zinc ion.</text>
</comment>
<comment type="subunit">
    <text evidence="1">Part of the RNA polymerase complex.</text>
</comment>
<comment type="subcellular location">
    <subcellularLocation>
        <location evidence="1">Cytoplasm</location>
    </subcellularLocation>
</comment>
<comment type="similarity">
    <text evidence="1">Belongs to the archaeal Rpo10/eukaryotic RPB10 RNA polymerase subunit family.</text>
</comment>
<feature type="chain" id="PRO_0000304196" description="DNA-directed RNA polymerase subunit Rpo10">
    <location>
        <begin position="1"/>
        <end position="62"/>
    </location>
</feature>
<feature type="binding site" evidence="1">
    <location>
        <position position="6"/>
    </location>
    <ligand>
        <name>Zn(2+)</name>
        <dbReference type="ChEBI" id="CHEBI:29105"/>
    </ligand>
</feature>
<feature type="binding site" evidence="1">
    <location>
        <position position="9"/>
    </location>
    <ligand>
        <name>Zn(2+)</name>
        <dbReference type="ChEBI" id="CHEBI:29105"/>
    </ligand>
</feature>
<feature type="binding site" evidence="1">
    <location>
        <position position="43"/>
    </location>
    <ligand>
        <name>Zn(2+)</name>
        <dbReference type="ChEBI" id="CHEBI:29105"/>
    </ligand>
</feature>
<feature type="binding site" evidence="1">
    <location>
        <position position="44"/>
    </location>
    <ligand>
        <name>Zn(2+)</name>
        <dbReference type="ChEBI" id="CHEBI:29105"/>
    </ligand>
</feature>